<gene>
    <name evidence="1" type="primary">rbcL</name>
</gene>
<feature type="chain" id="PRO_0000062453" description="Ribulose bisphosphate carboxylase large chain">
    <location>
        <begin position="1" status="less than"/>
        <end position="441" status="greater than"/>
    </location>
</feature>
<feature type="active site" description="Proton acceptor" evidence="1">
    <location>
        <position position="166"/>
    </location>
</feature>
<feature type="active site" description="Proton acceptor" evidence="1">
    <location>
        <position position="285"/>
    </location>
</feature>
<feature type="binding site" description="in homodimeric partner" evidence="1">
    <location>
        <position position="114"/>
    </location>
    <ligand>
        <name>substrate</name>
    </ligand>
</feature>
<feature type="binding site" evidence="1">
    <location>
        <position position="164"/>
    </location>
    <ligand>
        <name>substrate</name>
    </ligand>
</feature>
<feature type="binding site" evidence="1">
    <location>
        <position position="168"/>
    </location>
    <ligand>
        <name>substrate</name>
    </ligand>
</feature>
<feature type="binding site" description="via carbamate group" evidence="1">
    <location>
        <position position="192"/>
    </location>
    <ligand>
        <name>Mg(2+)</name>
        <dbReference type="ChEBI" id="CHEBI:18420"/>
    </ligand>
</feature>
<feature type="binding site" evidence="1">
    <location>
        <position position="194"/>
    </location>
    <ligand>
        <name>Mg(2+)</name>
        <dbReference type="ChEBI" id="CHEBI:18420"/>
    </ligand>
</feature>
<feature type="binding site" evidence="1">
    <location>
        <position position="195"/>
    </location>
    <ligand>
        <name>Mg(2+)</name>
        <dbReference type="ChEBI" id="CHEBI:18420"/>
    </ligand>
</feature>
<feature type="binding site" evidence="1">
    <location>
        <position position="286"/>
    </location>
    <ligand>
        <name>substrate</name>
    </ligand>
</feature>
<feature type="binding site" evidence="1">
    <location>
        <position position="318"/>
    </location>
    <ligand>
        <name>substrate</name>
    </ligand>
</feature>
<feature type="binding site" evidence="1">
    <location>
        <position position="370"/>
    </location>
    <ligand>
        <name>substrate</name>
    </ligand>
</feature>
<feature type="site" description="Transition state stabilizer" evidence="1">
    <location>
        <position position="325"/>
    </location>
</feature>
<feature type="modified residue" description="N6,N6,N6-trimethyllysine" evidence="1">
    <location>
        <position position="5"/>
    </location>
</feature>
<feature type="modified residue" description="N6-carboxylysine" evidence="1">
    <location>
        <position position="192"/>
    </location>
</feature>
<feature type="disulfide bond" description="Interchain; in linked form" evidence="1">
    <location>
        <position position="238"/>
    </location>
</feature>
<feature type="non-terminal residue">
    <location>
        <position position="1"/>
    </location>
</feature>
<feature type="non-terminal residue">
    <location>
        <position position="441"/>
    </location>
</feature>
<reference key="1">
    <citation type="journal article" date="1992" name="Science">
        <title>Carnivorous plants: phylogeny and structural evolution.</title>
        <authorList>
            <person name="Albert V.A."/>
            <person name="Williams S.E."/>
            <person name="Chase M.W."/>
        </authorList>
    </citation>
    <scope>NUCLEOTIDE SEQUENCE [GENOMIC DNA]</scope>
</reference>
<accession>P28410</accession>
<proteinExistence type="inferred from homology"/>
<organism>
    <name type="scientific">Drosera petiolaris</name>
    <name type="common">Woolly sundew</name>
    <name type="synonym">Carnivorous plant</name>
    <dbReference type="NCBI Taxonomy" id="4370"/>
    <lineage>
        <taxon>Eukaryota</taxon>
        <taxon>Viridiplantae</taxon>
        <taxon>Streptophyta</taxon>
        <taxon>Embryophyta</taxon>
        <taxon>Tracheophyta</taxon>
        <taxon>Spermatophyta</taxon>
        <taxon>Magnoliopsida</taxon>
        <taxon>eudicotyledons</taxon>
        <taxon>Gunneridae</taxon>
        <taxon>Pentapetalae</taxon>
        <taxon>Caryophyllales</taxon>
        <taxon>Droseraceae</taxon>
        <taxon>Drosera</taxon>
    </lineage>
</organism>
<geneLocation type="chloroplast"/>
<keyword id="KW-0113">Calvin cycle</keyword>
<keyword id="KW-0120">Carbon dioxide fixation</keyword>
<keyword id="KW-0150">Chloroplast</keyword>
<keyword id="KW-1015">Disulfide bond</keyword>
<keyword id="KW-0456">Lyase</keyword>
<keyword id="KW-0460">Magnesium</keyword>
<keyword id="KW-0479">Metal-binding</keyword>
<keyword id="KW-0488">Methylation</keyword>
<keyword id="KW-0503">Monooxygenase</keyword>
<keyword id="KW-0560">Oxidoreductase</keyword>
<keyword id="KW-0601">Photorespiration</keyword>
<keyword id="KW-0602">Photosynthesis</keyword>
<keyword id="KW-0934">Plastid</keyword>
<protein>
    <recommendedName>
        <fullName evidence="1">Ribulose bisphosphate carboxylase large chain</fullName>
        <shortName evidence="1">RuBisCO large subunit</shortName>
        <ecNumber evidence="1">4.1.1.39</ecNumber>
    </recommendedName>
</protein>
<name>RBL_DROPT</name>
<dbReference type="EC" id="4.1.1.39" evidence="1"/>
<dbReference type="EMBL" id="L01913">
    <property type="protein sequence ID" value="AAA16272.2"/>
    <property type="molecule type" value="Genomic_DNA"/>
</dbReference>
<dbReference type="SMR" id="P28410"/>
<dbReference type="GO" id="GO:0009507">
    <property type="term" value="C:chloroplast"/>
    <property type="evidence" value="ECO:0007669"/>
    <property type="project" value="UniProtKB-SubCell"/>
</dbReference>
<dbReference type="GO" id="GO:0000287">
    <property type="term" value="F:magnesium ion binding"/>
    <property type="evidence" value="ECO:0007669"/>
    <property type="project" value="InterPro"/>
</dbReference>
<dbReference type="GO" id="GO:0004497">
    <property type="term" value="F:monooxygenase activity"/>
    <property type="evidence" value="ECO:0007669"/>
    <property type="project" value="UniProtKB-KW"/>
</dbReference>
<dbReference type="GO" id="GO:0016984">
    <property type="term" value="F:ribulose-bisphosphate carboxylase activity"/>
    <property type="evidence" value="ECO:0007669"/>
    <property type="project" value="UniProtKB-EC"/>
</dbReference>
<dbReference type="GO" id="GO:0009853">
    <property type="term" value="P:photorespiration"/>
    <property type="evidence" value="ECO:0007669"/>
    <property type="project" value="UniProtKB-KW"/>
</dbReference>
<dbReference type="GO" id="GO:0019253">
    <property type="term" value="P:reductive pentose-phosphate cycle"/>
    <property type="evidence" value="ECO:0007669"/>
    <property type="project" value="UniProtKB-KW"/>
</dbReference>
<dbReference type="CDD" id="cd08212">
    <property type="entry name" value="RuBisCO_large_I"/>
    <property type="match status" value="1"/>
</dbReference>
<dbReference type="FunFam" id="3.20.20.110:FF:000003">
    <property type="entry name" value="Ribulose bisphosphate carboxylase large chain"/>
    <property type="match status" value="1"/>
</dbReference>
<dbReference type="FunFam" id="3.30.70.150:FF:000001">
    <property type="entry name" value="Ribulose bisphosphate carboxylase large chain"/>
    <property type="match status" value="1"/>
</dbReference>
<dbReference type="Gene3D" id="3.20.20.110">
    <property type="entry name" value="Ribulose bisphosphate carboxylase, large subunit, C-terminal domain"/>
    <property type="match status" value="1"/>
</dbReference>
<dbReference type="Gene3D" id="3.30.70.150">
    <property type="entry name" value="RuBisCO large subunit, N-terminal domain"/>
    <property type="match status" value="1"/>
</dbReference>
<dbReference type="HAMAP" id="MF_01338">
    <property type="entry name" value="RuBisCO_L_type1"/>
    <property type="match status" value="1"/>
</dbReference>
<dbReference type="InterPro" id="IPR033966">
    <property type="entry name" value="RuBisCO"/>
</dbReference>
<dbReference type="InterPro" id="IPR020878">
    <property type="entry name" value="RuBisCo_large_chain_AS"/>
</dbReference>
<dbReference type="InterPro" id="IPR000685">
    <property type="entry name" value="RuBisCO_lsu_C"/>
</dbReference>
<dbReference type="InterPro" id="IPR036376">
    <property type="entry name" value="RuBisCO_lsu_C_sf"/>
</dbReference>
<dbReference type="InterPro" id="IPR017443">
    <property type="entry name" value="RuBisCO_lsu_fd_N"/>
</dbReference>
<dbReference type="InterPro" id="IPR036422">
    <property type="entry name" value="RuBisCO_lsu_N_sf"/>
</dbReference>
<dbReference type="InterPro" id="IPR020888">
    <property type="entry name" value="RuBisCO_lsuI"/>
</dbReference>
<dbReference type="NCBIfam" id="NF003252">
    <property type="entry name" value="PRK04208.1"/>
    <property type="match status" value="1"/>
</dbReference>
<dbReference type="PANTHER" id="PTHR42704">
    <property type="entry name" value="RIBULOSE BISPHOSPHATE CARBOXYLASE"/>
    <property type="match status" value="1"/>
</dbReference>
<dbReference type="PANTHER" id="PTHR42704:SF15">
    <property type="entry name" value="RIBULOSE BISPHOSPHATE CARBOXYLASE LARGE CHAIN"/>
    <property type="match status" value="1"/>
</dbReference>
<dbReference type="Pfam" id="PF00016">
    <property type="entry name" value="RuBisCO_large"/>
    <property type="match status" value="1"/>
</dbReference>
<dbReference type="Pfam" id="PF02788">
    <property type="entry name" value="RuBisCO_large_N"/>
    <property type="match status" value="1"/>
</dbReference>
<dbReference type="SFLD" id="SFLDG01052">
    <property type="entry name" value="RuBisCO"/>
    <property type="match status" value="1"/>
</dbReference>
<dbReference type="SFLD" id="SFLDS00014">
    <property type="entry name" value="RuBisCO"/>
    <property type="match status" value="1"/>
</dbReference>
<dbReference type="SFLD" id="SFLDG00301">
    <property type="entry name" value="RuBisCO-like_proteins"/>
    <property type="match status" value="1"/>
</dbReference>
<dbReference type="SUPFAM" id="SSF51649">
    <property type="entry name" value="RuBisCo, C-terminal domain"/>
    <property type="match status" value="1"/>
</dbReference>
<dbReference type="SUPFAM" id="SSF54966">
    <property type="entry name" value="RuBisCO, large subunit, small (N-terminal) domain"/>
    <property type="match status" value="1"/>
</dbReference>
<dbReference type="PROSITE" id="PS00157">
    <property type="entry name" value="RUBISCO_LARGE"/>
    <property type="match status" value="1"/>
</dbReference>
<evidence type="ECO:0000255" key="1">
    <source>
        <dbReference type="HAMAP-Rule" id="MF_01338"/>
    </source>
</evidence>
<comment type="function">
    <text evidence="1">RuBisCO catalyzes two reactions: the carboxylation of D-ribulose 1,5-bisphosphate, the primary event in carbon dioxide fixation, as well as the oxidative fragmentation of the pentose substrate in the photorespiration process. Both reactions occur simultaneously and in competition at the same active site.</text>
</comment>
<comment type="catalytic activity">
    <reaction evidence="1">
        <text>2 (2R)-3-phosphoglycerate + 2 H(+) = D-ribulose 1,5-bisphosphate + CO2 + H2O</text>
        <dbReference type="Rhea" id="RHEA:23124"/>
        <dbReference type="ChEBI" id="CHEBI:15377"/>
        <dbReference type="ChEBI" id="CHEBI:15378"/>
        <dbReference type="ChEBI" id="CHEBI:16526"/>
        <dbReference type="ChEBI" id="CHEBI:57870"/>
        <dbReference type="ChEBI" id="CHEBI:58272"/>
        <dbReference type="EC" id="4.1.1.39"/>
    </reaction>
</comment>
<comment type="catalytic activity">
    <reaction evidence="1">
        <text>D-ribulose 1,5-bisphosphate + O2 = 2-phosphoglycolate + (2R)-3-phosphoglycerate + 2 H(+)</text>
        <dbReference type="Rhea" id="RHEA:36631"/>
        <dbReference type="ChEBI" id="CHEBI:15378"/>
        <dbReference type="ChEBI" id="CHEBI:15379"/>
        <dbReference type="ChEBI" id="CHEBI:57870"/>
        <dbReference type="ChEBI" id="CHEBI:58033"/>
        <dbReference type="ChEBI" id="CHEBI:58272"/>
    </reaction>
</comment>
<comment type="cofactor">
    <cofactor evidence="1">
        <name>Mg(2+)</name>
        <dbReference type="ChEBI" id="CHEBI:18420"/>
    </cofactor>
    <text evidence="1">Binds 1 Mg(2+) ion per subunit.</text>
</comment>
<comment type="subunit">
    <text evidence="1">Heterohexadecamer of 8 large chains and 8 small chains; disulfide-linked. The disulfide link is formed within the large subunit homodimers.</text>
</comment>
<comment type="subcellular location">
    <subcellularLocation>
        <location>Plastid</location>
        <location>Chloroplast</location>
    </subcellularLocation>
</comment>
<comment type="PTM">
    <text evidence="1">The disulfide bond which can form in the large chain dimeric partners within the hexadecamer appears to be associated with oxidative stress and protein turnover.</text>
</comment>
<comment type="miscellaneous">
    <text evidence="1">The basic functional RuBisCO is composed of a large chain homodimer in a 'head-to-tail' conformation. In form I RuBisCO this homodimer is arranged in a barrel-like tetramer with the small subunits forming a tetrameric 'cap' on each end of the 'barrel'.</text>
</comment>
<comment type="similarity">
    <text evidence="1">Belongs to the RuBisCO large chain family. Type I subfamily.</text>
</comment>
<sequence>SVGFKAGVKDYKLTYYTPDYQTLDTDILAAFRVTPQPGVPPEEAGAAVAAESSTGTWTTVWTDGLTSLDRYKGRCYHIEPVAGEENQYIVYVAYPLDLFEEGSVTNMFTSIVGNVFGFKALRALRLEDLRIPPAYIKTFQGPPHGIQVERDKLNKYGRPLLGCTIKPKLGLSAKNYGRAVYECLRGGLDFTKDDENVNSQPFMRWRDRFLFCAEAIFKAQAETGEIKGHYLNATAGTCEEMIKRAVFARELGVPIVMHDYLTGGFTANTSLAHYCRDNGLLLHIHRAMHAVIDRQKNHGMHFRVLAKALRMSGGDHIHAGTVVGKLEGERDITLGFVDLLRDDYLEKDRSRGIYFNQFWVSMPGVLPVASGGIHVWHMPALTEIFGDDSVLQFGGGTLGHPWGNAPGAVANRVALEACVQARNEGYDLARDGNDIIRETCQ</sequence>